<keyword id="KW-0067">ATP-binding</keyword>
<keyword id="KW-0997">Cell inner membrane</keyword>
<keyword id="KW-1003">Cell membrane</keyword>
<keyword id="KW-0472">Membrane</keyword>
<keyword id="KW-0547">Nucleotide-binding</keyword>
<keyword id="KW-0918">Phosphonate transport</keyword>
<keyword id="KW-1278">Translocase</keyword>
<keyword id="KW-0813">Transport</keyword>
<feature type="chain" id="PRO_0000274731" description="Phosphonates import ATP-binding protein PhnC 2">
    <location>
        <begin position="1"/>
        <end position="277"/>
    </location>
</feature>
<feature type="domain" description="ABC transporter" evidence="1">
    <location>
        <begin position="5"/>
        <end position="253"/>
    </location>
</feature>
<feature type="binding site" evidence="1">
    <location>
        <begin position="37"/>
        <end position="44"/>
    </location>
    <ligand>
        <name>ATP</name>
        <dbReference type="ChEBI" id="CHEBI:30616"/>
    </ligand>
</feature>
<name>PHNC2_PSEU2</name>
<evidence type="ECO:0000255" key="1">
    <source>
        <dbReference type="HAMAP-Rule" id="MF_01713"/>
    </source>
</evidence>
<dbReference type="EC" id="7.3.2.2" evidence="1"/>
<dbReference type="EMBL" id="CP000075">
    <property type="protein sequence ID" value="AAY37290.1"/>
    <property type="molecule type" value="Genomic_DNA"/>
</dbReference>
<dbReference type="RefSeq" id="YP_235328.1">
    <property type="nucleotide sequence ID" value="NC_007005.1"/>
</dbReference>
<dbReference type="SMR" id="Q4ZU82"/>
<dbReference type="STRING" id="205918.Psyr_2247"/>
<dbReference type="KEGG" id="psb:Psyr_2247"/>
<dbReference type="PATRIC" id="fig|205918.7.peg.2298"/>
<dbReference type="eggNOG" id="COG3638">
    <property type="taxonomic scope" value="Bacteria"/>
</dbReference>
<dbReference type="HOGENOM" id="CLU_000604_1_22_6"/>
<dbReference type="OrthoDB" id="9802264at2"/>
<dbReference type="Proteomes" id="UP000000426">
    <property type="component" value="Chromosome"/>
</dbReference>
<dbReference type="GO" id="GO:0005886">
    <property type="term" value="C:plasma membrane"/>
    <property type="evidence" value="ECO:0007669"/>
    <property type="project" value="UniProtKB-SubCell"/>
</dbReference>
<dbReference type="GO" id="GO:0015416">
    <property type="term" value="F:ABC-type phosphonate transporter activity"/>
    <property type="evidence" value="ECO:0007669"/>
    <property type="project" value="UniProtKB-EC"/>
</dbReference>
<dbReference type="GO" id="GO:0005524">
    <property type="term" value="F:ATP binding"/>
    <property type="evidence" value="ECO:0007669"/>
    <property type="project" value="UniProtKB-KW"/>
</dbReference>
<dbReference type="GO" id="GO:0016887">
    <property type="term" value="F:ATP hydrolysis activity"/>
    <property type="evidence" value="ECO:0007669"/>
    <property type="project" value="InterPro"/>
</dbReference>
<dbReference type="CDD" id="cd03256">
    <property type="entry name" value="ABC_PhnC_transporter"/>
    <property type="match status" value="1"/>
</dbReference>
<dbReference type="Gene3D" id="3.40.50.300">
    <property type="entry name" value="P-loop containing nucleotide triphosphate hydrolases"/>
    <property type="match status" value="1"/>
</dbReference>
<dbReference type="InterPro" id="IPR003593">
    <property type="entry name" value="AAA+_ATPase"/>
</dbReference>
<dbReference type="InterPro" id="IPR003439">
    <property type="entry name" value="ABC_transporter-like_ATP-bd"/>
</dbReference>
<dbReference type="InterPro" id="IPR017871">
    <property type="entry name" value="ABC_transporter-like_CS"/>
</dbReference>
<dbReference type="InterPro" id="IPR012693">
    <property type="entry name" value="ABC_transpr_PhnC"/>
</dbReference>
<dbReference type="InterPro" id="IPR050086">
    <property type="entry name" value="MetN_ABC_transporter-like"/>
</dbReference>
<dbReference type="InterPro" id="IPR027417">
    <property type="entry name" value="P-loop_NTPase"/>
</dbReference>
<dbReference type="NCBIfam" id="TIGR02315">
    <property type="entry name" value="ABC_phnC"/>
    <property type="match status" value="1"/>
</dbReference>
<dbReference type="PANTHER" id="PTHR43166">
    <property type="entry name" value="AMINO ACID IMPORT ATP-BINDING PROTEIN"/>
    <property type="match status" value="1"/>
</dbReference>
<dbReference type="PANTHER" id="PTHR43166:SF6">
    <property type="entry name" value="PHOSPHONATES IMPORT ATP-BINDING PROTEIN PHNC"/>
    <property type="match status" value="1"/>
</dbReference>
<dbReference type="Pfam" id="PF00005">
    <property type="entry name" value="ABC_tran"/>
    <property type="match status" value="1"/>
</dbReference>
<dbReference type="SMART" id="SM00382">
    <property type="entry name" value="AAA"/>
    <property type="match status" value="1"/>
</dbReference>
<dbReference type="SUPFAM" id="SSF52540">
    <property type="entry name" value="P-loop containing nucleoside triphosphate hydrolases"/>
    <property type="match status" value="1"/>
</dbReference>
<dbReference type="PROSITE" id="PS00211">
    <property type="entry name" value="ABC_TRANSPORTER_1"/>
    <property type="match status" value="1"/>
</dbReference>
<dbReference type="PROSITE" id="PS50893">
    <property type="entry name" value="ABC_TRANSPORTER_2"/>
    <property type="match status" value="1"/>
</dbReference>
<dbReference type="PROSITE" id="PS51249">
    <property type="entry name" value="PHNC"/>
    <property type="match status" value="1"/>
</dbReference>
<accession>Q4ZU82</accession>
<comment type="function">
    <text evidence="1">Part of the ABC transporter complex PhnCDE involved in phosphonates import. Responsible for energy coupling to the transport system.</text>
</comment>
<comment type="catalytic activity">
    <reaction evidence="1">
        <text>phosphonate(out) + ATP + H2O = phosphonate(in) + ADP + phosphate + H(+)</text>
        <dbReference type="Rhea" id="RHEA:18065"/>
        <dbReference type="ChEBI" id="CHEBI:15377"/>
        <dbReference type="ChEBI" id="CHEBI:15378"/>
        <dbReference type="ChEBI" id="CHEBI:16215"/>
        <dbReference type="ChEBI" id="CHEBI:30616"/>
        <dbReference type="ChEBI" id="CHEBI:43474"/>
        <dbReference type="ChEBI" id="CHEBI:456216"/>
        <dbReference type="EC" id="7.3.2.2"/>
    </reaction>
</comment>
<comment type="subunit">
    <text evidence="1">The complex is composed of two ATP-binding proteins (PhnC), two transmembrane proteins (PhnE) and a solute-binding protein (PhnD).</text>
</comment>
<comment type="subcellular location">
    <subcellularLocation>
        <location evidence="1">Cell inner membrane</location>
        <topology evidence="1">Peripheral membrane protein</topology>
    </subcellularLocation>
</comment>
<comment type="similarity">
    <text evidence="1">Belongs to the ABC transporter superfamily. Phosphonates importer (TC 3.A.1.9.1) family.</text>
</comment>
<reference key="1">
    <citation type="journal article" date="2005" name="Proc. Natl. Acad. Sci. U.S.A.">
        <title>Comparison of the complete genome sequences of Pseudomonas syringae pv. syringae B728a and pv. tomato DC3000.</title>
        <authorList>
            <person name="Feil H."/>
            <person name="Feil W.S."/>
            <person name="Chain P."/>
            <person name="Larimer F."/>
            <person name="Dibartolo G."/>
            <person name="Copeland A."/>
            <person name="Lykidis A."/>
            <person name="Trong S."/>
            <person name="Nolan M."/>
            <person name="Goltsman E."/>
            <person name="Thiel J."/>
            <person name="Malfatti S."/>
            <person name="Loper J.E."/>
            <person name="Lapidus A."/>
            <person name="Detter J.C."/>
            <person name="Land M."/>
            <person name="Richardson P.M."/>
            <person name="Kyrpides N.C."/>
            <person name="Ivanova N."/>
            <person name="Lindow S.E."/>
        </authorList>
    </citation>
    <scope>NUCLEOTIDE SEQUENCE [LARGE SCALE GENOMIC DNA]</scope>
    <source>
        <strain>B728a</strain>
    </source>
</reference>
<protein>
    <recommendedName>
        <fullName evidence="1">Phosphonates import ATP-binding protein PhnC 2</fullName>
        <ecNumber evidence="1">7.3.2.2</ecNumber>
    </recommendedName>
</protein>
<proteinExistence type="inferred from homology"/>
<organism>
    <name type="scientific">Pseudomonas syringae pv. syringae (strain B728a)</name>
    <dbReference type="NCBI Taxonomy" id="205918"/>
    <lineage>
        <taxon>Bacteria</taxon>
        <taxon>Pseudomonadati</taxon>
        <taxon>Pseudomonadota</taxon>
        <taxon>Gammaproteobacteria</taxon>
        <taxon>Pseudomonadales</taxon>
        <taxon>Pseudomonadaceae</taxon>
        <taxon>Pseudomonas</taxon>
        <taxon>Pseudomonas syringae</taxon>
    </lineage>
</organism>
<gene>
    <name evidence="1" type="primary">phnC2</name>
    <name type="ordered locus">Psyr_2247</name>
</gene>
<sequence>MNEAIHVQGLNKTFSHKSALIDLALSIQPGEMVALIGASGSGKSTLLRHLAGLACCDRSNGGQVQVLGREVQSSGRLNSQVRRLRADIGYIFQQFNLVNRLSVLDNVLLGCLGRMPRWRGSLALFNNEEKQRAMVALERVGLADLAAQRASTLSGGQQQRVAIARALTQRAEVILADEPIASLDPESARRVMEILADINRRDGKTVVVTLHQVDYAVRYCPRAVALKSGRIHFDGQAQDLSKQFLNDLYGADADASLMITERSQRVRQKARLTLAKV</sequence>